<protein>
    <recommendedName>
        <fullName>Pro-opiomelanocortin</fullName>
        <shortName>POMC</shortName>
    </recommendedName>
    <alternativeName>
        <fullName>Corticotropin-lipotropin</fullName>
    </alternativeName>
    <component>
        <recommendedName>
            <fullName>Corticotropin</fullName>
        </recommendedName>
        <alternativeName>
            <fullName>Adrenocorticotropic hormone</fullName>
            <shortName>ACTH</shortName>
        </alternativeName>
    </component>
    <component>
        <recommendedName>
            <fullName>Melanocyte-stimulating hormone alpha</fullName>
            <shortName>Alpha-MSH</shortName>
        </recommendedName>
        <alternativeName>
            <fullName>Melanotropin alpha</fullName>
        </alternativeName>
    </component>
    <component>
        <recommendedName>
            <fullName>Corticotropin-like intermediary peptide</fullName>
            <shortName>CLIP</shortName>
        </recommendedName>
    </component>
</protein>
<sequence>SYSMEHFRWGKPVGKKRRPVKVYPNGAENESAEAFPVEV</sequence>
<accession>P06297</accession>
<name>COLI_RABIT</name>
<feature type="peptide" id="PRO_0000025026" description="Corticotropin">
    <location>
        <begin position="1"/>
        <end position="39"/>
    </location>
</feature>
<feature type="peptide" id="PRO_0000025027" description="Melanocyte-stimulating hormone alpha">
    <location>
        <begin position="1"/>
        <end position="13"/>
    </location>
</feature>
<feature type="peptide" id="PRO_0000025028" description="Corticotropin-like intermediary peptide">
    <location>
        <begin position="19"/>
        <end position="39"/>
    </location>
</feature>
<feature type="modified residue" description="N-acetylserine" evidence="2">
    <location>
        <position position="1"/>
    </location>
</feature>
<feature type="modified residue" description="Valine amide" evidence="1">
    <location>
        <position position="13"/>
    </location>
</feature>
<feature type="modified residue" description="Phosphoserine" evidence="4">
    <location>
        <position position="31"/>
    </location>
</feature>
<feature type="non-terminal residue">
    <location>
        <position position="1"/>
    </location>
</feature>
<feature type="non-terminal residue">
    <location>
        <position position="39"/>
    </location>
</feature>
<gene>
    <name type="primary">POMC</name>
</gene>
<comment type="function">
    <text>Precursor protein for pituitary hormones that regulate stress and environmental adaptation.</text>
</comment>
<comment type="function">
    <molecule>Corticotropin</molecule>
    <text>Stimulates the adrenal glands to release cortisol.</text>
</comment>
<comment type="function">
    <molecule>Melanocyte-stimulating hormone alpha</molecule>
    <text>Anorexigenic peptide. Increases the pigmentation of skin by increasing melanin production in melanocytes.</text>
</comment>
<comment type="subcellular location">
    <subcellularLocation>
        <location evidence="3">Secreted</location>
    </subcellularLocation>
</comment>
<comment type="tissue specificity">
    <text evidence="4">Expressed in the pituitary gland.</text>
</comment>
<comment type="miscellaneous">
    <text>Residues 16-17 were deduced from the amino acid composition and by homology with other mammalian corticotropins.</text>
</comment>
<comment type="similarity">
    <text evidence="5">Belongs to the POMC family.</text>
</comment>
<keyword id="KW-0007">Acetylation</keyword>
<keyword id="KW-0027">Amidation</keyword>
<keyword id="KW-0165">Cleavage on pair of basic residues</keyword>
<keyword id="KW-0903">Direct protein sequencing</keyword>
<keyword id="KW-0372">Hormone</keyword>
<keyword id="KW-0597">Phosphoprotein</keyword>
<keyword id="KW-1185">Reference proteome</keyword>
<keyword id="KW-0964">Secreted</keyword>
<reference key="1">
    <citation type="journal article" date="1986" name="Endocrinology">
        <title>Isolation, characterization, and corticotropic activity of rabbit adrenocorticotropin.</title>
        <authorList>
            <person name="Mulay S."/>
            <person name="Bennett H.P.J."/>
            <person name="Routhier R."/>
            <person name="Solomon S."/>
        </authorList>
    </citation>
    <scope>PROTEIN SEQUENCE</scope>
    <scope>PHOSPHORYLATION AT SER-31</scope>
    <scope>TISSUE SPECIFICITY</scope>
</reference>
<evidence type="ECO:0000250" key="1">
    <source>
        <dbReference type="UniProtKB" id="P01190"/>
    </source>
</evidence>
<evidence type="ECO:0000250" key="2">
    <source>
        <dbReference type="UniProtKB" id="P01191"/>
    </source>
</evidence>
<evidence type="ECO:0000250" key="3">
    <source>
        <dbReference type="UniProtKB" id="P01193"/>
    </source>
</evidence>
<evidence type="ECO:0000269" key="4">
    <source>
    </source>
</evidence>
<evidence type="ECO:0000305" key="5"/>
<proteinExistence type="evidence at protein level"/>
<organism>
    <name type="scientific">Oryctolagus cuniculus</name>
    <name type="common">Rabbit</name>
    <dbReference type="NCBI Taxonomy" id="9986"/>
    <lineage>
        <taxon>Eukaryota</taxon>
        <taxon>Metazoa</taxon>
        <taxon>Chordata</taxon>
        <taxon>Craniata</taxon>
        <taxon>Vertebrata</taxon>
        <taxon>Euteleostomi</taxon>
        <taxon>Mammalia</taxon>
        <taxon>Eutheria</taxon>
        <taxon>Euarchontoglires</taxon>
        <taxon>Glires</taxon>
        <taxon>Lagomorpha</taxon>
        <taxon>Leporidae</taxon>
        <taxon>Oryctolagus</taxon>
    </lineage>
</organism>
<dbReference type="PIR" id="A01457">
    <property type="entry name" value="A01457"/>
</dbReference>
<dbReference type="iPTMnet" id="P06297"/>
<dbReference type="PaxDb" id="9986-ENSOCUP00000005213"/>
<dbReference type="eggNOG" id="ENOG502RZNY">
    <property type="taxonomic scope" value="Eukaryota"/>
</dbReference>
<dbReference type="InParanoid" id="P06297"/>
<dbReference type="Proteomes" id="UP000001811">
    <property type="component" value="Unplaced"/>
</dbReference>
<dbReference type="GO" id="GO:0005615">
    <property type="term" value="C:extracellular space"/>
    <property type="evidence" value="ECO:0007669"/>
    <property type="project" value="TreeGrafter"/>
</dbReference>
<dbReference type="GO" id="GO:0030141">
    <property type="term" value="C:secretory granule"/>
    <property type="evidence" value="ECO:0007669"/>
    <property type="project" value="TreeGrafter"/>
</dbReference>
<dbReference type="GO" id="GO:0001664">
    <property type="term" value="F:G protein-coupled receptor binding"/>
    <property type="evidence" value="ECO:0007669"/>
    <property type="project" value="TreeGrafter"/>
</dbReference>
<dbReference type="GO" id="GO:0005179">
    <property type="term" value="F:hormone activity"/>
    <property type="evidence" value="ECO:0007669"/>
    <property type="project" value="UniProtKB-KW"/>
</dbReference>
<dbReference type="GO" id="GO:2000852">
    <property type="term" value="P:regulation of corticosterone secretion"/>
    <property type="evidence" value="ECO:0007669"/>
    <property type="project" value="TreeGrafter"/>
</dbReference>
<dbReference type="InterPro" id="IPR013531">
    <property type="entry name" value="Mcrtin_ACTH_cent"/>
</dbReference>
<dbReference type="InterPro" id="IPR001941">
    <property type="entry name" value="PMOC"/>
</dbReference>
<dbReference type="InterPro" id="IPR050878">
    <property type="entry name" value="POMC-derived_peptides"/>
</dbReference>
<dbReference type="PANTHER" id="PTHR11416">
    <property type="entry name" value="PRO-OPIOMELANOCORTIN"/>
    <property type="match status" value="1"/>
</dbReference>
<dbReference type="PANTHER" id="PTHR11416:SF7">
    <property type="entry name" value="PRO-OPIOMELANOCORTIN"/>
    <property type="match status" value="1"/>
</dbReference>
<dbReference type="Pfam" id="PF00976">
    <property type="entry name" value="ACTH_domain"/>
    <property type="match status" value="1"/>
</dbReference>
<dbReference type="PRINTS" id="PR00383">
    <property type="entry name" value="MELANOCORTIN"/>
</dbReference>
<dbReference type="SMART" id="SM01363">
    <property type="entry name" value="ACTH_domain"/>
    <property type="match status" value="1"/>
</dbReference>